<name>LIPR1_HUMAN</name>
<reference key="1">
    <citation type="journal article" date="1992" name="J. Biol. Chem.">
        <title>Two novel human pancreatic lipase related proteins, hPLRP1 and hPLRP2. Differences in colipase dependence and in lipase activity.</title>
        <authorList>
            <person name="Giller T."/>
            <person name="Buchwald P."/>
            <person name="Blum-Kaelin D."/>
            <person name="Hunziker W."/>
        </authorList>
    </citation>
    <scope>NUCLEOTIDE SEQUENCE [MRNA] (ISOFORM 1)</scope>
    <scope>ABSENCE OF LIPASE ACTIVITY</scope>
    <scope>SUBCELLULAR LOCATION</scope>
    <scope>TISSUE SPECIFICITY</scope>
    <source>
        <tissue>Pancreas</tissue>
    </source>
</reference>
<reference key="2">
    <citation type="journal article" date="2007" name="BMC Genomics">
        <title>The full-ORF clone resource of the German cDNA consortium.</title>
        <authorList>
            <person name="Bechtel S."/>
            <person name="Rosenfelder H."/>
            <person name="Duda A."/>
            <person name="Schmidt C.P."/>
            <person name="Ernst U."/>
            <person name="Wellenreuther R."/>
            <person name="Mehrle A."/>
            <person name="Schuster C."/>
            <person name="Bahr A."/>
            <person name="Bloecker H."/>
            <person name="Heubner D."/>
            <person name="Hoerlein A."/>
            <person name="Michel G."/>
            <person name="Wedler H."/>
            <person name="Koehrer K."/>
            <person name="Ottenwaelder B."/>
            <person name="Poustka A."/>
            <person name="Wiemann S."/>
            <person name="Schupp I."/>
        </authorList>
    </citation>
    <scope>NUCLEOTIDE SEQUENCE [LARGE SCALE MRNA] (ISOFORM 3)</scope>
    <source>
        <tissue>Liver</tissue>
    </source>
</reference>
<reference key="3">
    <citation type="journal article" date="2004" name="Genome Res.">
        <title>The status, quality, and expansion of the NIH full-length cDNA project: the Mammalian Gene Collection (MGC).</title>
        <authorList>
            <consortium name="The MGC Project Team"/>
        </authorList>
    </citation>
    <scope>NUCLEOTIDE SEQUENCE [LARGE SCALE MRNA] (ISOFORMS 1 AND 2)</scope>
    <scope>VARIANT ASP-414</scope>
    <source>
        <tissue>Pancreas</tissue>
    </source>
</reference>
<reference key="4">
    <citation type="journal article" date="2009" name="Mol. Nutr. Food Res.">
        <title>Individual and combined action of pancreatic lipase and pancreatic lipase-related proteins 1 and 2 on native versus homogenized milk fat globules.</title>
        <authorList>
            <person name="Berton A."/>
            <person name="Sebban-Kreuzer C."/>
            <person name="Rouvellac S."/>
            <person name="Lopez C."/>
            <person name="Crenon I."/>
        </authorList>
    </citation>
    <scope>FUNCTION</scope>
    <scope>SUBCELLULAR LOCATION</scope>
    <scope>ABSENCE OF CATALYTIC ACTIVITY</scope>
</reference>
<reference key="5">
    <citation type="submission" date="2009-02" db="PDB data bank">
        <title>Structure of the human pancreatic lipase-related protein 1.</title>
        <authorList>
            <consortium name="Structural genomics consortium (SGC)"/>
        </authorList>
    </citation>
    <scope>X-RAY CRYSTALLOGRAPHY (2.2 ANGSTROMS) OF 18-467 IN COMPLEX WITH CALCIUM IONS</scope>
    <scope>DISULFIDE BONDS</scope>
</reference>
<reference key="6">
    <citation type="journal article" date="2006" name="Science">
        <title>The consensus coding sequences of human breast and colorectal cancers.</title>
        <authorList>
            <person name="Sjoeblom T."/>
            <person name="Jones S."/>
            <person name="Wood L.D."/>
            <person name="Parsons D.W."/>
            <person name="Lin J."/>
            <person name="Barber T.D."/>
            <person name="Mandelker D."/>
            <person name="Leary R.J."/>
            <person name="Ptak J."/>
            <person name="Silliman N."/>
            <person name="Szabo S."/>
            <person name="Buckhaults P."/>
            <person name="Farrell C."/>
            <person name="Meeh P."/>
            <person name="Markowitz S.D."/>
            <person name="Willis J."/>
            <person name="Dawson D."/>
            <person name="Willson J.K.V."/>
            <person name="Gazdar A.F."/>
            <person name="Hartigan J."/>
            <person name="Wu L."/>
            <person name="Liu C."/>
            <person name="Parmigiani G."/>
            <person name="Park B.H."/>
            <person name="Bachman K.E."/>
            <person name="Papadopoulos N."/>
            <person name="Vogelstein B."/>
            <person name="Kinzler K.W."/>
            <person name="Velculescu V.E."/>
        </authorList>
    </citation>
    <scope>VARIANT [LARGE SCALE ANALYSIS] CYS-129</scope>
</reference>
<comment type="function">
    <text evidence="1 7">May function as inhibitor of dietary triglyceride digestion. Lacks detectable lipase activity towards triglycerides, diglycerides, phosphatidylcholine, galactolipids or cholesterol esters (in vitro) (By similarity).</text>
</comment>
<comment type="interaction">
    <interactant intactId="EBI-8652812">
        <id>P54315</id>
    </interactant>
    <interactant intactId="EBI-12701138">
        <id>P41181</id>
        <label>AQP2</label>
    </interactant>
    <organismsDiffer>false</organismsDiffer>
    <experiments>3</experiments>
</comment>
<comment type="interaction">
    <interactant intactId="EBI-8652812">
        <id>P54315</id>
    </interactant>
    <interactant intactId="EBI-19947314">
        <id>Q8NFU1</id>
        <label>BEST2</label>
    </interactant>
    <organismsDiffer>false</organismsDiffer>
    <experiments>3</experiments>
</comment>
<comment type="interaction">
    <interactant intactId="EBI-8652812">
        <id>P54315</id>
    </interactant>
    <interactant intactId="EBI-7797864">
        <id>P11912</id>
        <label>CD79A</label>
    </interactant>
    <organismsDiffer>false</organismsDiffer>
    <experiments>3</experiments>
</comment>
<comment type="interaction">
    <interactant intactId="EBI-8652812">
        <id>P54315</id>
    </interactant>
    <interactant intactId="EBI-2622997">
        <id>Q9HA82</id>
        <label>CERS4</label>
    </interactant>
    <organismsDiffer>false</organismsDiffer>
    <experiments>3</experiments>
</comment>
<comment type="interaction">
    <interactant intactId="EBI-8652812">
        <id>P54315</id>
    </interactant>
    <interactant intactId="EBI-18013275">
        <id>Q7Z7G2</id>
        <label>CPLX4</label>
    </interactant>
    <organismsDiffer>false</organismsDiffer>
    <experiments>3</experiments>
</comment>
<comment type="interaction">
    <interactant intactId="EBI-8652812">
        <id>P54315</id>
    </interactant>
    <interactant intactId="EBI-1046040">
        <id>P00387</id>
        <label>CYB5R3</label>
    </interactant>
    <organismsDiffer>false</organismsDiffer>
    <experiments>3</experiments>
</comment>
<comment type="interaction">
    <interactant intactId="EBI-8652812">
        <id>P54315</id>
    </interactant>
    <interactant intactId="EBI-3915253">
        <id>Q15125</id>
        <label>EBP</label>
    </interactant>
    <organismsDiffer>false</organismsDiffer>
    <experiments>3</experiments>
</comment>
<comment type="interaction">
    <interactant intactId="EBI-8652812">
        <id>P54315</id>
    </interactant>
    <interactant intactId="EBI-18304435">
        <id>Q5JX71</id>
        <label>FAM209A</label>
    </interactant>
    <organismsDiffer>false</organismsDiffer>
    <experiments>3</experiments>
</comment>
<comment type="interaction">
    <interactant intactId="EBI-8652812">
        <id>P54315</id>
    </interactant>
    <interactant intactId="EBI-2833872">
        <id>O15552</id>
        <label>FFAR2</label>
    </interactant>
    <organismsDiffer>false</organismsDiffer>
    <experiments>3</experiments>
</comment>
<comment type="interaction">
    <interactant intactId="EBI-8652812">
        <id>P54315</id>
    </interactant>
    <interactant intactId="EBI-11110431">
        <id>Q8TB36</id>
        <label>GDAP1</label>
    </interactant>
    <organismsDiffer>false</organismsDiffer>
    <experiments>3</experiments>
</comment>
<comment type="interaction">
    <interactant intactId="EBI-8652812">
        <id>P54315</id>
    </interactant>
    <interactant intactId="EBI-17458373">
        <id>P48165</id>
        <label>GJA8</label>
    </interactant>
    <organismsDiffer>false</organismsDiffer>
    <experiments>3</experiments>
</comment>
<comment type="interaction">
    <interactant intactId="EBI-8652812">
        <id>P54315</id>
    </interactant>
    <interactant intactId="EBI-3909454">
        <id>O95377</id>
        <label>GJB5</label>
    </interactant>
    <organismsDiffer>false</organismsDiffer>
    <experiments>3</experiments>
</comment>
<comment type="interaction">
    <interactant intactId="EBI-8652812">
        <id>P54315</id>
    </interactant>
    <interactant intactId="EBI-13345167">
        <id>Q8TDT2</id>
        <label>GPR152</label>
    </interactant>
    <organismsDiffer>false</organismsDiffer>
    <experiments>3</experiments>
</comment>
<comment type="interaction">
    <interactant intactId="EBI-8652812">
        <id>P54315</id>
    </interactant>
    <interactant intactId="EBI-18076404">
        <id>O15529</id>
        <label>GPR42</label>
    </interactant>
    <organismsDiffer>false</organismsDiffer>
    <experiments>3</experiments>
</comment>
<comment type="interaction">
    <interactant intactId="EBI-8652812">
        <id>P54315</id>
    </interactant>
    <interactant intactId="EBI-11721746">
        <id>Q8TED1</id>
        <label>GPX8</label>
    </interactant>
    <organismsDiffer>false</organismsDiffer>
    <experiments>3</experiments>
</comment>
<comment type="interaction">
    <interactant intactId="EBI-8652812">
        <id>P54315</id>
    </interactant>
    <interactant intactId="EBI-18053395">
        <id>Q7Z5P4</id>
        <label>HSD17B13</label>
    </interactant>
    <organismsDiffer>false</organismsDiffer>
    <experiments>3</experiments>
</comment>
<comment type="interaction">
    <interactant intactId="EBI-8652812">
        <id>P54315</id>
    </interactant>
    <interactant intactId="EBI-12017638">
        <id>P48051</id>
        <label>KCNJ6</label>
    </interactant>
    <organismsDiffer>false</organismsDiffer>
    <experiments>3</experiments>
</comment>
<comment type="interaction">
    <interactant intactId="EBI-8652812">
        <id>P54315</id>
    </interactant>
    <interactant intactId="EBI-17490413">
        <id>A8MZ59</id>
        <label>LEUTX</label>
    </interactant>
    <organismsDiffer>false</organismsDiffer>
    <experiments>3</experiments>
</comment>
<comment type="interaction">
    <interactant intactId="EBI-8652812">
        <id>P54315</id>
    </interactant>
    <interactant intactId="EBI-11304917">
        <id>Q8N386</id>
        <label>LRRC25</label>
    </interactant>
    <organismsDiffer>false</organismsDiffer>
    <experiments>3</experiments>
</comment>
<comment type="interaction">
    <interactant intactId="EBI-8652812">
        <id>P54315</id>
    </interactant>
    <interactant intactId="EBI-2689785">
        <id>Q8NI22</id>
        <label>MCFD2</label>
    </interactant>
    <organismsDiffer>false</organismsDiffer>
    <experiments>3</experiments>
</comment>
<comment type="interaction">
    <interactant intactId="EBI-8652812">
        <id>P54315</id>
    </interactant>
    <interactant intactId="EBI-16439278">
        <id>Q6FHY5</id>
        <label>MEOX2</label>
    </interactant>
    <organismsDiffer>false</organismsDiffer>
    <experiments>3</experiments>
</comment>
<comment type="interaction">
    <interactant intactId="EBI-8652812">
        <id>P54315</id>
    </interactant>
    <interactant intactId="EBI-17263240">
        <id>P15941-11</id>
        <label>MUC1</label>
    </interactant>
    <organismsDiffer>false</organismsDiffer>
    <experiments>3</experiments>
</comment>
<comment type="interaction">
    <interactant intactId="EBI-8652812">
        <id>P54315</id>
    </interactant>
    <interactant intactId="EBI-741874">
        <id>Q9Y375</id>
        <label>NDUFAF1</label>
    </interactant>
    <organismsDiffer>false</organismsDiffer>
    <experiments>3</experiments>
</comment>
<comment type="interaction">
    <interactant intactId="EBI-8652812">
        <id>P54315</id>
    </interactant>
    <interactant intactId="EBI-10969203">
        <id>O14524-2</id>
        <label>NEMP1</label>
    </interactant>
    <organismsDiffer>false</organismsDiffer>
    <experiments>3</experiments>
</comment>
<comment type="interaction">
    <interactant intactId="EBI-8652812">
        <id>P54315</id>
    </interactant>
    <interactant intactId="EBI-594836">
        <id>O00623</id>
        <label>PEX12</label>
    </interactant>
    <organismsDiffer>false</organismsDiffer>
    <experiments>3</experiments>
</comment>
<comment type="interaction">
    <interactant intactId="EBI-8652812">
        <id>P54315</id>
    </interactant>
    <interactant intactId="EBI-10192441">
        <id>Q86VR2</id>
        <label>RETREG3</label>
    </interactant>
    <organismsDiffer>false</organismsDiffer>
    <experiments>3</experiments>
</comment>
<comment type="interaction">
    <interactant intactId="EBI-8652812">
        <id>P54315</id>
    </interactant>
    <interactant intactId="EBI-18159983">
        <id>Q3KNW5</id>
        <label>SLC10A6</label>
    </interactant>
    <organismsDiffer>false</organismsDiffer>
    <experiments>3</experiments>
</comment>
<comment type="interaction">
    <interactant intactId="EBI-8652812">
        <id>P54315</id>
    </interactant>
    <interactant intactId="EBI-17595455">
        <id>P54219-3</id>
        <label>SLC18A1</label>
    </interactant>
    <organismsDiffer>false</organismsDiffer>
    <experiments>3</experiments>
</comment>
<comment type="interaction">
    <interactant intactId="EBI-8652812">
        <id>P54315</id>
    </interactant>
    <interactant intactId="EBI-12811757">
        <id>O95436-2</id>
        <label>SLC34A2</label>
    </interactant>
    <organismsDiffer>false</organismsDiffer>
    <experiments>3</experiments>
</comment>
<comment type="interaction">
    <interactant intactId="EBI-8652812">
        <id>P54315</id>
    </interactant>
    <interactant intactId="EBI-17295964">
        <id>Q9NQQ7-3</id>
        <label>SLC35C2</label>
    </interactant>
    <organismsDiffer>false</organismsDiffer>
    <experiments>3</experiments>
</comment>
<comment type="interaction">
    <interactant intactId="EBI-8652812">
        <id>P54315</id>
    </interactant>
    <interactant intactId="EBI-12898013">
        <id>Q9NP94</id>
        <label>SLC39A2</label>
    </interactant>
    <organismsDiffer>false</organismsDiffer>
    <experiments>3</experiments>
</comment>
<comment type="interaction">
    <interactant intactId="EBI-8652812">
        <id>P54315</id>
    </interactant>
    <interactant intactId="EBI-4289564">
        <id>P30825</id>
        <label>SLC7A1</label>
    </interactant>
    <organismsDiffer>false</organismsDiffer>
    <experiments>3</experiments>
</comment>
<comment type="interaction">
    <interactant intactId="EBI-8652812">
        <id>P54315</id>
    </interactant>
    <interactant intactId="EBI-712466">
        <id>Q16623</id>
        <label>STX1A</label>
    </interactant>
    <organismsDiffer>false</organismsDiffer>
    <experiments>3</experiments>
</comment>
<comment type="interaction">
    <interactant intactId="EBI-8652812">
        <id>P54315</id>
    </interactant>
    <interactant intactId="EBI-8638294">
        <id>Q9NUH8</id>
        <label>TMEM14B</label>
    </interactant>
    <organismsDiffer>false</organismsDiffer>
    <experiments>3</experiments>
</comment>
<comment type="interaction">
    <interactant intactId="EBI-8652812">
        <id>P54315</id>
    </interactant>
    <interactant intactId="EBI-10982110">
        <id>Q96Q45-2</id>
        <label>TMEM237</label>
    </interactant>
    <organismsDiffer>false</organismsDiffer>
    <experiments>5</experiments>
</comment>
<comment type="interaction">
    <interactant intactId="EBI-8652812">
        <id>P54315</id>
    </interactant>
    <interactant intactId="EBI-11724433">
        <id>Q6ZT21</id>
        <label>TMPPE</label>
    </interactant>
    <organismsDiffer>false</organismsDiffer>
    <experiments>3</experiments>
</comment>
<comment type="interaction">
    <interactant intactId="EBI-8652812">
        <id>P54315</id>
    </interactant>
    <interactant intactId="EBI-6447886">
        <id>Q9Y320</id>
        <label>TMX2</label>
    </interactant>
    <organismsDiffer>false</organismsDiffer>
    <experiments>3</experiments>
</comment>
<comment type="interaction">
    <interactant intactId="EBI-8652812">
        <id>P54315</id>
    </interactant>
    <interactant intactId="EBI-4289938">
        <id>P19075</id>
        <label>TSPAN8</label>
    </interactant>
    <organismsDiffer>false</organismsDiffer>
    <experiments>3</experiments>
</comment>
<comment type="subcellular location">
    <subcellularLocation>
        <location evidence="4 7">Secreted</location>
    </subcellularLocation>
</comment>
<comment type="alternative products">
    <event type="alternative splicing"/>
    <isoform>
        <id>P54315-1</id>
        <name>1</name>
        <sequence type="displayed"/>
    </isoform>
    <isoform>
        <id>P54315-2</id>
        <name>2</name>
        <sequence type="described" ref="VSP_014097 VSP_014100"/>
    </isoform>
    <isoform>
        <id>P54315-3</id>
        <name>3</name>
        <sequence type="described" ref="VSP_014098 VSP_014099"/>
    </isoform>
</comment>
<comment type="tissue specificity">
    <text evidence="4">Pancreas.</text>
</comment>
<comment type="similarity">
    <text evidence="11">Belongs to the AB hydrolase superfamily. Lipase family.</text>
</comment>
<feature type="signal peptide" evidence="2">
    <location>
        <begin position="1"/>
        <end position="17"/>
    </location>
</feature>
<feature type="chain" id="PRO_0000017790" description="Inactive pancreatic lipase-related protein 1">
    <location>
        <begin position="18"/>
        <end position="467"/>
    </location>
</feature>
<feature type="domain" description="PLAT" evidence="3">
    <location>
        <begin position="356"/>
        <end position="467"/>
    </location>
</feature>
<feature type="active site" description="Nucleophile">
    <location>
        <position position="171"/>
    </location>
</feature>
<feature type="active site" description="Charge relay system">
    <location>
        <position position="194"/>
    </location>
</feature>
<feature type="active site" description="Charge relay system">
    <location>
        <position position="281"/>
    </location>
</feature>
<feature type="binding site">
    <location>
        <position position="205"/>
    </location>
    <ligand>
        <name>Ca(2+)</name>
        <dbReference type="ChEBI" id="CHEBI:29108"/>
    </ligand>
</feature>
<feature type="binding site">
    <location>
        <position position="208"/>
    </location>
    <ligand>
        <name>Ca(2+)</name>
        <dbReference type="ChEBI" id="CHEBI:29108"/>
    </ligand>
</feature>
<feature type="binding site">
    <location>
        <position position="210"/>
    </location>
    <ligand>
        <name>Ca(2+)</name>
        <dbReference type="ChEBI" id="CHEBI:29108"/>
    </ligand>
</feature>
<feature type="binding site">
    <location>
        <position position="213"/>
    </location>
    <ligand>
        <name>Ca(2+)</name>
        <dbReference type="ChEBI" id="CHEBI:29108"/>
    </ligand>
</feature>
<feature type="disulfide bond" evidence="3 8">
    <location>
        <begin position="21"/>
        <end position="27"/>
    </location>
</feature>
<feature type="disulfide bond" evidence="3 8">
    <location>
        <begin position="109"/>
        <end position="120"/>
    </location>
</feature>
<feature type="disulfide bond" evidence="3 8">
    <location>
        <begin position="255"/>
        <end position="279"/>
    </location>
</feature>
<feature type="disulfide bond" evidence="3 8">
    <location>
        <begin position="303"/>
        <end position="314"/>
    </location>
</feature>
<feature type="disulfide bond" evidence="3 8">
    <location>
        <begin position="317"/>
        <end position="322"/>
    </location>
</feature>
<feature type="disulfide bond" evidence="3 8">
    <location>
        <begin position="451"/>
        <end position="467"/>
    </location>
</feature>
<feature type="splice variant" id="VSP_014097" description="In isoform 2." evidence="9">
    <original>KLFEVEEVNCICVDWKKGSQATYTQAANNVRVVGAQVAQMLDILLTEYSYPPSKVHLIGHSLGAHVAGEAGSKTPG</original>
    <variation>VGASSDPCGQLRPTLLLTSLHHFMHSRNLYILGNFMQLKCFSSQKLKCLSMFPHYICTLKQPHLLLEKYSYYLISG</variation>
    <location>
        <begin position="111"/>
        <end position="186"/>
    </location>
</feature>
<feature type="splice variant" id="VSP_014098" description="In isoform 3." evidence="10">
    <original>KLFEVEE</original>
    <variation>PGASPRA</variation>
    <location>
        <begin position="111"/>
        <end position="117"/>
    </location>
</feature>
<feature type="splice variant" id="VSP_014099" description="In isoform 3." evidence="10">
    <location>
        <begin position="118"/>
        <end position="467"/>
    </location>
</feature>
<feature type="splice variant" id="VSP_014100" description="In isoform 2." evidence="9">
    <location>
        <begin position="187"/>
        <end position="467"/>
    </location>
</feature>
<feature type="sequence variant" id="VAR_049820" description="In dbSNP:rs11197744.">
    <original>N</original>
    <variation>D</variation>
    <location>
        <position position="61"/>
    </location>
</feature>
<feature type="sequence variant" id="VAR_036379" description="In a breast cancer sample; somatic mutation." evidence="6">
    <original>S</original>
    <variation>C</variation>
    <location>
        <position position="129"/>
    </location>
</feature>
<feature type="sequence variant" id="VAR_022082" description="In dbSNP:rs2305205.">
    <original>A</original>
    <variation>V</variation>
    <location>
        <position position="271"/>
    </location>
</feature>
<feature type="sequence variant" id="VAR_022659" description="In dbSNP:rs2305204." evidence="5">
    <original>E</original>
    <variation>D</variation>
    <location>
        <position position="414"/>
    </location>
</feature>
<feature type="sequence variant" id="VAR_014915" description="In dbSNP:rs1049125.">
    <original>L</original>
    <variation>P</variation>
    <location>
        <position position="461"/>
    </location>
</feature>
<feature type="strand" evidence="12">
    <location>
        <begin position="19"/>
        <end position="22"/>
    </location>
</feature>
<feature type="turn" evidence="12">
    <location>
        <begin position="23"/>
        <end position="25"/>
    </location>
</feature>
<feature type="strand" evidence="12">
    <location>
        <begin position="26"/>
        <end position="30"/>
    </location>
</feature>
<feature type="turn" evidence="12">
    <location>
        <begin position="32"/>
        <end position="34"/>
    </location>
</feature>
<feature type="strand" evidence="12">
    <location>
        <begin position="35"/>
        <end position="40"/>
    </location>
</feature>
<feature type="helix" evidence="12">
    <location>
        <begin position="49"/>
        <end position="52"/>
    </location>
</feature>
<feature type="strand" evidence="12">
    <location>
        <begin position="55"/>
        <end position="63"/>
    </location>
</feature>
<feature type="strand" evidence="12">
    <location>
        <begin position="68"/>
        <end position="71"/>
    </location>
</feature>
<feature type="helix" evidence="12">
    <location>
        <begin position="76"/>
        <end position="80"/>
    </location>
</feature>
<feature type="strand" evidence="12">
    <location>
        <begin position="87"/>
        <end position="93"/>
    </location>
</feature>
<feature type="helix" evidence="12">
    <location>
        <begin position="104"/>
        <end position="115"/>
    </location>
</feature>
<feature type="strand" evidence="12">
    <location>
        <begin position="118"/>
        <end position="124"/>
    </location>
</feature>
<feature type="helix" evidence="12">
    <location>
        <begin position="126"/>
        <end position="129"/>
    </location>
</feature>
<feature type="helix" evidence="12">
    <location>
        <begin position="133"/>
        <end position="158"/>
    </location>
</feature>
<feature type="helix" evidence="12">
    <location>
        <begin position="162"/>
        <end position="164"/>
    </location>
</feature>
<feature type="strand" evidence="12">
    <location>
        <begin position="165"/>
        <end position="170"/>
    </location>
</feature>
<feature type="helix" evidence="12">
    <location>
        <begin position="173"/>
        <end position="182"/>
    </location>
</feature>
<feature type="strand" evidence="12">
    <location>
        <begin position="189"/>
        <end position="194"/>
    </location>
</feature>
<feature type="turn" evidence="12">
    <location>
        <begin position="198"/>
        <end position="202"/>
    </location>
</feature>
<feature type="turn" evidence="12">
    <location>
        <begin position="205"/>
        <end position="207"/>
    </location>
</feature>
<feature type="helix" evidence="12">
    <location>
        <begin position="211"/>
        <end position="213"/>
    </location>
</feature>
<feature type="strand" evidence="12">
    <location>
        <begin position="214"/>
        <end position="220"/>
    </location>
</feature>
<feature type="helix" evidence="12">
    <location>
        <begin position="227"/>
        <end position="230"/>
    </location>
</feature>
<feature type="strand" evidence="12">
    <location>
        <begin position="240"/>
        <end position="246"/>
    </location>
</feature>
<feature type="strand" evidence="12">
    <location>
        <begin position="249"/>
        <end position="251"/>
    </location>
</feature>
<feature type="helix" evidence="12">
    <location>
        <begin position="266"/>
        <end position="270"/>
    </location>
</feature>
<feature type="helix" evidence="12">
    <location>
        <begin position="279"/>
        <end position="293"/>
    </location>
</feature>
<feature type="turn" evidence="12">
    <location>
        <begin position="295"/>
        <end position="298"/>
    </location>
</feature>
<feature type="helix" evidence="12">
    <location>
        <begin position="306"/>
        <end position="310"/>
    </location>
</feature>
<feature type="strand" evidence="12">
    <location>
        <begin position="324"/>
        <end position="326"/>
    </location>
</feature>
<feature type="helix" evidence="12">
    <location>
        <begin position="327"/>
        <end position="331"/>
    </location>
</feature>
<feature type="strand" evidence="12">
    <location>
        <begin position="341"/>
        <end position="345"/>
    </location>
</feature>
<feature type="strand" evidence="12">
    <location>
        <begin position="349"/>
        <end position="352"/>
    </location>
</feature>
<feature type="strand" evidence="12">
    <location>
        <begin position="356"/>
        <end position="367"/>
    </location>
</feature>
<feature type="strand" evidence="12">
    <location>
        <begin position="369"/>
        <end position="379"/>
    </location>
</feature>
<feature type="strand" evidence="12">
    <location>
        <begin position="387"/>
        <end position="394"/>
    </location>
</feature>
<feature type="strand" evidence="12">
    <location>
        <begin position="399"/>
        <end position="408"/>
    </location>
</feature>
<feature type="strand" evidence="12">
    <location>
        <begin position="412"/>
        <end position="421"/>
    </location>
</feature>
<feature type="strand" evidence="12">
    <location>
        <begin position="432"/>
        <end position="441"/>
    </location>
</feature>
<feature type="strand" evidence="12">
    <location>
        <begin position="447"/>
        <end position="451"/>
    </location>
</feature>
<feature type="strand" evidence="12">
    <location>
        <begin position="462"/>
        <end position="466"/>
    </location>
</feature>
<evidence type="ECO:0000250" key="1"/>
<evidence type="ECO:0000255" key="2"/>
<evidence type="ECO:0000255" key="3">
    <source>
        <dbReference type="PROSITE-ProRule" id="PRU00152"/>
    </source>
</evidence>
<evidence type="ECO:0000269" key="4">
    <source>
    </source>
</evidence>
<evidence type="ECO:0000269" key="5">
    <source>
    </source>
</evidence>
<evidence type="ECO:0000269" key="6">
    <source>
    </source>
</evidence>
<evidence type="ECO:0000269" key="7">
    <source>
    </source>
</evidence>
<evidence type="ECO:0000269" key="8">
    <source ref="5"/>
</evidence>
<evidence type="ECO:0000303" key="9">
    <source>
    </source>
</evidence>
<evidence type="ECO:0000303" key="10">
    <source>
    </source>
</evidence>
<evidence type="ECO:0000305" key="11"/>
<evidence type="ECO:0007829" key="12">
    <source>
        <dbReference type="PDB" id="2PPL"/>
    </source>
</evidence>
<gene>
    <name type="primary">PNLIPRP1</name>
    <name type="synonym">PLRP1</name>
</gene>
<sequence length="467" mass="51848">MLIFWTITLFLLGAAKGKEVCYEDLGCFSDTEPWGGTAIRPLKILPWSPEKIGTRFLLYTNENPNNFQILLLSDPSTIEASNFQMDRKTRFIIHGFIDKGDESWVTDMCKKLFEVEEVNCICVDWKKGSQATYTQAANNVRVVGAQVAQMLDILLTEYSYPPSKVHLIGHSLGAHVAGEAGSKTPGLSRITGLDPVEASFESTPEEVRLDPSDADFVDVIHTDAAPLIPFLGFGTNQQMGHLDFFPNGGESMPGCKKNALSQIVDLDGIWAGTRDFVACNHLRSYKYYLESILNPDGFAAYPCTSYKSFESDKCFPCPDQGCPQMGHYADKFAGRTSEEQQKFFLNTGEASNFARWRYGVSITLSGRTATGQIKVALFGNKGNTHQYSIFRGILKPGSTHSYEFDAKLDVGTIEKVKFLWNNNVINPTLPKVGATKITVQKGEEKTVYNFCSEDTVREDTLLTLTPC</sequence>
<keyword id="KW-0002">3D-structure</keyword>
<keyword id="KW-0025">Alternative splicing</keyword>
<keyword id="KW-0106">Calcium</keyword>
<keyword id="KW-1015">Disulfide bond</keyword>
<keyword id="KW-0479">Metal-binding</keyword>
<keyword id="KW-1267">Proteomics identification</keyword>
<keyword id="KW-1185">Reference proteome</keyword>
<keyword id="KW-0964">Secreted</keyword>
<keyword id="KW-0732">Signal</keyword>
<accession>P54315</accession>
<accession>Q68D83</accession>
<accession>Q68DR6</accession>
<accession>Q8TAU2</accession>
<accession>Q9BS82</accession>
<dbReference type="EMBL" id="M93283">
    <property type="protein sequence ID" value="AAA59532.1"/>
    <property type="molecule type" value="mRNA"/>
</dbReference>
<dbReference type="EMBL" id="CR749299">
    <property type="protein sequence ID" value="CAH18154.1"/>
    <property type="molecule type" value="mRNA"/>
</dbReference>
<dbReference type="EMBL" id="CR749524">
    <property type="protein sequence ID" value="CAH18337.1"/>
    <property type="molecule type" value="mRNA"/>
</dbReference>
<dbReference type="EMBL" id="BC005233">
    <property type="protein sequence ID" value="AAH05233.1"/>
    <property type="molecule type" value="mRNA"/>
</dbReference>
<dbReference type="EMBL" id="BC025784">
    <property type="protein sequence ID" value="AAH25784.1"/>
    <property type="molecule type" value="mRNA"/>
</dbReference>
<dbReference type="CCDS" id="CCDS7595.1">
    <molecule id="P54315-1"/>
</dbReference>
<dbReference type="PIR" id="A43357">
    <property type="entry name" value="A43357"/>
</dbReference>
<dbReference type="RefSeq" id="NP_001290064.1">
    <molecule id="P54315-1"/>
    <property type="nucleotide sequence ID" value="NM_001303135.1"/>
</dbReference>
<dbReference type="RefSeq" id="NP_006220.1">
    <molecule id="P54315-1"/>
    <property type="nucleotide sequence ID" value="NM_006229.4"/>
</dbReference>
<dbReference type="RefSeq" id="XP_011538170.1">
    <property type="nucleotide sequence ID" value="XM_011539868.1"/>
</dbReference>
<dbReference type="PDB" id="2PPL">
    <property type="method" value="X-ray"/>
    <property type="resolution" value="2.20 A"/>
    <property type="chains" value="A=18-467"/>
</dbReference>
<dbReference type="PDBsum" id="2PPL"/>
<dbReference type="SMR" id="P54315"/>
<dbReference type="BioGRID" id="111408">
    <property type="interactions" value="170"/>
</dbReference>
<dbReference type="FunCoup" id="P54315">
    <property type="interactions" value="178"/>
</dbReference>
<dbReference type="IntAct" id="P54315">
    <property type="interactions" value="48"/>
</dbReference>
<dbReference type="MINT" id="P54315"/>
<dbReference type="STRING" id="9606.ENSP00000433933"/>
<dbReference type="ESTHER" id="human-PNLIPRP1">
    <property type="family name" value="Pancreatic_lipase"/>
</dbReference>
<dbReference type="PhosphoSitePlus" id="P54315"/>
<dbReference type="BioMuta" id="PNLIPRP1"/>
<dbReference type="DMDM" id="1708837"/>
<dbReference type="jPOST" id="P54315"/>
<dbReference type="MassIVE" id="P54315"/>
<dbReference type="PaxDb" id="9606-ENSP00000433933"/>
<dbReference type="PeptideAtlas" id="P54315"/>
<dbReference type="ProteomicsDB" id="56681">
    <molecule id="P54315-1"/>
</dbReference>
<dbReference type="ProteomicsDB" id="56682">
    <molecule id="P54315-2"/>
</dbReference>
<dbReference type="ProteomicsDB" id="56683">
    <molecule id="P54315-3"/>
</dbReference>
<dbReference type="Antibodypedia" id="35303">
    <property type="antibodies" value="77 antibodies from 17 providers"/>
</dbReference>
<dbReference type="DNASU" id="5407"/>
<dbReference type="Ensembl" id="ENST00000358834.9">
    <molecule id="P54315-1"/>
    <property type="protein sequence ID" value="ENSP00000351695.4"/>
    <property type="gene ID" value="ENSG00000187021.15"/>
</dbReference>
<dbReference type="Ensembl" id="ENST00000528052.5">
    <molecule id="P54315-1"/>
    <property type="protein sequence ID" value="ENSP00000433933.1"/>
    <property type="gene ID" value="ENSG00000187021.15"/>
</dbReference>
<dbReference type="Ensembl" id="ENST00000709137.1">
    <molecule id="P54315-1"/>
    <property type="protein sequence ID" value="ENSP00000517519.1"/>
    <property type="gene ID" value="ENSG00000291891.1"/>
</dbReference>
<dbReference type="Ensembl" id="ENST00000709140.1">
    <molecule id="P54315-1"/>
    <property type="protein sequence ID" value="ENSP00000517520.1"/>
    <property type="gene ID" value="ENSG00000291891.1"/>
</dbReference>
<dbReference type="GeneID" id="5407"/>
<dbReference type="KEGG" id="hsa:5407"/>
<dbReference type="MANE-Select" id="ENST00000358834.9">
    <property type="protein sequence ID" value="ENSP00000351695.4"/>
    <property type="RefSeq nucleotide sequence ID" value="NM_006229.4"/>
    <property type="RefSeq protein sequence ID" value="NP_006220.1"/>
</dbReference>
<dbReference type="UCSC" id="uc001lco.2">
    <molecule id="P54315-1"/>
    <property type="organism name" value="human"/>
</dbReference>
<dbReference type="AGR" id="HGNC:9156"/>
<dbReference type="CTD" id="5407"/>
<dbReference type="DisGeNET" id="5407"/>
<dbReference type="GeneCards" id="PNLIPRP1"/>
<dbReference type="HGNC" id="HGNC:9156">
    <property type="gene designation" value="PNLIPRP1"/>
</dbReference>
<dbReference type="HPA" id="ENSG00000187021">
    <property type="expression patterns" value="Tissue enriched (pancreas)"/>
</dbReference>
<dbReference type="MIM" id="604422">
    <property type="type" value="gene"/>
</dbReference>
<dbReference type="neXtProt" id="NX_P54315"/>
<dbReference type="OpenTargets" id="ENSG00000187021"/>
<dbReference type="PharmGKB" id="PA33479"/>
<dbReference type="VEuPathDB" id="HostDB:ENSG00000187021"/>
<dbReference type="eggNOG" id="ENOG502QUK7">
    <property type="taxonomic scope" value="Eukaryota"/>
</dbReference>
<dbReference type="GeneTree" id="ENSGT00940000162375"/>
<dbReference type="HOGENOM" id="CLU_027171_0_2_1"/>
<dbReference type="InParanoid" id="P54315"/>
<dbReference type="OMA" id="WSGTRDF"/>
<dbReference type="OrthoDB" id="199913at2759"/>
<dbReference type="PAN-GO" id="P54315">
    <property type="GO annotations" value="0 GO annotations based on evolutionary models"/>
</dbReference>
<dbReference type="PhylomeDB" id="P54315"/>
<dbReference type="TreeFam" id="TF324997"/>
<dbReference type="BRENDA" id="3.1.1.26">
    <property type="organism ID" value="2681"/>
</dbReference>
<dbReference type="PathwayCommons" id="P54315"/>
<dbReference type="Reactome" id="R-HSA-192456">
    <property type="pathway name" value="Digestion of dietary lipid"/>
</dbReference>
<dbReference type="SignaLink" id="P54315"/>
<dbReference type="BioGRID-ORCS" id="5407">
    <property type="hits" value="11 hits in 1149 CRISPR screens"/>
</dbReference>
<dbReference type="ChiTaRS" id="PNLIPRP1">
    <property type="organism name" value="human"/>
</dbReference>
<dbReference type="EvolutionaryTrace" id="P54315"/>
<dbReference type="GenomeRNAi" id="5407"/>
<dbReference type="Pharos" id="P54315">
    <property type="development level" value="Tbio"/>
</dbReference>
<dbReference type="PRO" id="PR:P54315"/>
<dbReference type="Proteomes" id="UP000005640">
    <property type="component" value="Chromosome 10"/>
</dbReference>
<dbReference type="RNAct" id="P54315">
    <property type="molecule type" value="protein"/>
</dbReference>
<dbReference type="Bgee" id="ENSG00000187021">
    <property type="expression patterns" value="Expressed in body of pancreas and 99 other cell types or tissues"/>
</dbReference>
<dbReference type="ExpressionAtlas" id="P54315">
    <property type="expression patterns" value="baseline and differential"/>
</dbReference>
<dbReference type="GO" id="GO:0005576">
    <property type="term" value="C:extracellular region"/>
    <property type="evidence" value="ECO:0000304"/>
    <property type="project" value="ProtInc"/>
</dbReference>
<dbReference type="GO" id="GO:0005509">
    <property type="term" value="F:calcium ion binding"/>
    <property type="evidence" value="ECO:0000250"/>
    <property type="project" value="UniProtKB"/>
</dbReference>
<dbReference type="GO" id="GO:0004465">
    <property type="term" value="F:lipoprotein lipase activity"/>
    <property type="evidence" value="ECO:0000318"/>
    <property type="project" value="GO_Central"/>
</dbReference>
<dbReference type="GO" id="GO:0008970">
    <property type="term" value="F:phospholipase A1 activity"/>
    <property type="evidence" value="ECO:0000318"/>
    <property type="project" value="GO_Central"/>
</dbReference>
<dbReference type="GO" id="GO:0004806">
    <property type="term" value="F:triacylglycerol lipase activity"/>
    <property type="evidence" value="ECO:0000304"/>
    <property type="project" value="ProtInc"/>
</dbReference>
<dbReference type="GO" id="GO:0042632">
    <property type="term" value="P:cholesterol homeostasis"/>
    <property type="evidence" value="ECO:0000318"/>
    <property type="project" value="GO_Central"/>
</dbReference>
<dbReference type="GO" id="GO:0006633">
    <property type="term" value="P:fatty acid biosynthetic process"/>
    <property type="evidence" value="ECO:0000318"/>
    <property type="project" value="GO_Central"/>
</dbReference>
<dbReference type="GO" id="GO:0034375">
    <property type="term" value="P:high-density lipoprotein particle remodeling"/>
    <property type="evidence" value="ECO:0000318"/>
    <property type="project" value="GO_Central"/>
</dbReference>
<dbReference type="GO" id="GO:0019433">
    <property type="term" value="P:triglyceride catabolic process"/>
    <property type="evidence" value="ECO:0000318"/>
    <property type="project" value="GO_Central"/>
</dbReference>
<dbReference type="CDD" id="cd00707">
    <property type="entry name" value="Pancreat_lipase_like"/>
    <property type="match status" value="1"/>
</dbReference>
<dbReference type="CDD" id="cd01759">
    <property type="entry name" value="PLAT_PL"/>
    <property type="match status" value="1"/>
</dbReference>
<dbReference type="FunFam" id="3.40.50.1820:FF:000033">
    <property type="entry name" value="Pancreatic triacylglycerol lipase"/>
    <property type="match status" value="1"/>
</dbReference>
<dbReference type="FunFam" id="2.60.60.20:FF:000003">
    <property type="entry name" value="Triacylglycerol lipase"/>
    <property type="match status" value="1"/>
</dbReference>
<dbReference type="Gene3D" id="3.40.50.1820">
    <property type="entry name" value="alpha/beta hydrolase"/>
    <property type="match status" value="1"/>
</dbReference>
<dbReference type="Gene3D" id="2.60.60.20">
    <property type="entry name" value="PLAT/LH2 domain"/>
    <property type="match status" value="1"/>
</dbReference>
<dbReference type="InterPro" id="IPR029058">
    <property type="entry name" value="AB_hydrolase_fold"/>
</dbReference>
<dbReference type="InterPro" id="IPR013818">
    <property type="entry name" value="Lipase"/>
</dbReference>
<dbReference type="InterPro" id="IPR016272">
    <property type="entry name" value="Lipase_LIPH"/>
</dbReference>
<dbReference type="InterPro" id="IPR033906">
    <property type="entry name" value="Lipase_N"/>
</dbReference>
<dbReference type="InterPro" id="IPR002331">
    <property type="entry name" value="Lipase_panc"/>
</dbReference>
<dbReference type="InterPro" id="IPR001024">
    <property type="entry name" value="PLAT/LH2_dom"/>
</dbReference>
<dbReference type="InterPro" id="IPR036392">
    <property type="entry name" value="PLAT/LH2_dom_sf"/>
</dbReference>
<dbReference type="InterPro" id="IPR000734">
    <property type="entry name" value="TAG_lipase"/>
</dbReference>
<dbReference type="PANTHER" id="PTHR11610:SF108">
    <property type="entry name" value="INACTIVE PANCREATIC LIPASE-RELATED PROTEIN 1"/>
    <property type="match status" value="1"/>
</dbReference>
<dbReference type="PANTHER" id="PTHR11610">
    <property type="entry name" value="LIPASE"/>
    <property type="match status" value="1"/>
</dbReference>
<dbReference type="Pfam" id="PF00151">
    <property type="entry name" value="Lipase"/>
    <property type="match status" value="1"/>
</dbReference>
<dbReference type="Pfam" id="PF01477">
    <property type="entry name" value="PLAT"/>
    <property type="match status" value="1"/>
</dbReference>
<dbReference type="PIRSF" id="PIRSF000865">
    <property type="entry name" value="Lipoprotein_lipase_LIPH"/>
    <property type="match status" value="1"/>
</dbReference>
<dbReference type="PRINTS" id="PR00823">
    <property type="entry name" value="PANCLIPASE"/>
</dbReference>
<dbReference type="PRINTS" id="PR00821">
    <property type="entry name" value="TAGLIPASE"/>
</dbReference>
<dbReference type="SMART" id="SM00308">
    <property type="entry name" value="LH2"/>
    <property type="match status" value="1"/>
</dbReference>
<dbReference type="SUPFAM" id="SSF53474">
    <property type="entry name" value="alpha/beta-Hydrolases"/>
    <property type="match status" value="1"/>
</dbReference>
<dbReference type="SUPFAM" id="SSF49723">
    <property type="entry name" value="Lipase/lipooxygenase domain (PLAT/LH2 domain)"/>
    <property type="match status" value="1"/>
</dbReference>
<dbReference type="PROSITE" id="PS00120">
    <property type="entry name" value="LIPASE_SER"/>
    <property type="match status" value="1"/>
</dbReference>
<dbReference type="PROSITE" id="PS50095">
    <property type="entry name" value="PLAT"/>
    <property type="match status" value="1"/>
</dbReference>
<proteinExistence type="evidence at protein level"/>
<organism>
    <name type="scientific">Homo sapiens</name>
    <name type="common">Human</name>
    <dbReference type="NCBI Taxonomy" id="9606"/>
    <lineage>
        <taxon>Eukaryota</taxon>
        <taxon>Metazoa</taxon>
        <taxon>Chordata</taxon>
        <taxon>Craniata</taxon>
        <taxon>Vertebrata</taxon>
        <taxon>Euteleostomi</taxon>
        <taxon>Mammalia</taxon>
        <taxon>Eutheria</taxon>
        <taxon>Euarchontoglires</taxon>
        <taxon>Primates</taxon>
        <taxon>Haplorrhini</taxon>
        <taxon>Catarrhini</taxon>
        <taxon>Hominidae</taxon>
        <taxon>Homo</taxon>
    </lineage>
</organism>
<protein>
    <recommendedName>
        <fullName>Inactive pancreatic lipase-related protein 1</fullName>
        <shortName>PL-RP1</shortName>
    </recommendedName>
</protein>